<reference key="1">
    <citation type="journal article" date="2006" name="Genome Biol.">
        <title>Genomic analysis reveals that Pseudomonas aeruginosa virulence is combinatorial.</title>
        <authorList>
            <person name="Lee D.G."/>
            <person name="Urbach J.M."/>
            <person name="Wu G."/>
            <person name="Liberati N.T."/>
            <person name="Feinbaum R.L."/>
            <person name="Miyata S."/>
            <person name="Diggins L.T."/>
            <person name="He J."/>
            <person name="Saucier M."/>
            <person name="Deziel E."/>
            <person name="Friedman L."/>
            <person name="Li L."/>
            <person name="Grills G."/>
            <person name="Montgomery K."/>
            <person name="Kucherlapati R."/>
            <person name="Rahme L.G."/>
            <person name="Ausubel F.M."/>
        </authorList>
    </citation>
    <scope>NUCLEOTIDE SEQUENCE [LARGE SCALE GENOMIC DNA]</scope>
    <source>
        <strain>UCBPP-PA14</strain>
    </source>
</reference>
<gene>
    <name evidence="1" type="primary">rplW</name>
    <name type="ordered locus">PA14_08870</name>
</gene>
<name>RL23_PSEAB</name>
<accession>Q02T78</accession>
<comment type="function">
    <text evidence="1">One of the early assembly proteins it binds 23S rRNA. One of the proteins that surrounds the polypeptide exit tunnel on the outside of the ribosome. Forms the main docking site for trigger factor binding to the ribosome.</text>
</comment>
<comment type="subunit">
    <text evidence="1">Part of the 50S ribosomal subunit. Contacts protein L29, and trigger factor when it is bound to the ribosome.</text>
</comment>
<comment type="similarity">
    <text evidence="1">Belongs to the universal ribosomal protein uL23 family.</text>
</comment>
<proteinExistence type="inferred from homology"/>
<protein>
    <recommendedName>
        <fullName evidence="1">Large ribosomal subunit protein uL23</fullName>
    </recommendedName>
    <alternativeName>
        <fullName evidence="2">50S ribosomal protein L23</fullName>
    </alternativeName>
</protein>
<sequence length="99" mass="10950">MNQERVFKVLLGPHISEKATGLADGKSQFVFKVATDATKLEIKKAVESLFSVKVQRVTTLNVKGKTKRTARGLGKRNDWKKAYIALQPGQDLDFATSAE</sequence>
<keyword id="KW-0687">Ribonucleoprotein</keyword>
<keyword id="KW-0689">Ribosomal protein</keyword>
<keyword id="KW-0694">RNA-binding</keyword>
<keyword id="KW-0699">rRNA-binding</keyword>
<feature type="chain" id="PRO_1000068139" description="Large ribosomal subunit protein uL23">
    <location>
        <begin position="1"/>
        <end position="99"/>
    </location>
</feature>
<organism>
    <name type="scientific">Pseudomonas aeruginosa (strain UCBPP-PA14)</name>
    <dbReference type="NCBI Taxonomy" id="208963"/>
    <lineage>
        <taxon>Bacteria</taxon>
        <taxon>Pseudomonadati</taxon>
        <taxon>Pseudomonadota</taxon>
        <taxon>Gammaproteobacteria</taxon>
        <taxon>Pseudomonadales</taxon>
        <taxon>Pseudomonadaceae</taxon>
        <taxon>Pseudomonas</taxon>
    </lineage>
</organism>
<dbReference type="EMBL" id="CP000438">
    <property type="protein sequence ID" value="ABJ13532.1"/>
    <property type="molecule type" value="Genomic_DNA"/>
</dbReference>
<dbReference type="RefSeq" id="WP_003093736.1">
    <property type="nucleotide sequence ID" value="NZ_CP034244.1"/>
</dbReference>
<dbReference type="SMR" id="Q02T78"/>
<dbReference type="GeneID" id="77219200"/>
<dbReference type="KEGG" id="pau:PA14_08870"/>
<dbReference type="PseudoCAP" id="PA14_08870"/>
<dbReference type="HOGENOM" id="CLU_037562_3_1_6"/>
<dbReference type="BioCyc" id="PAER208963:G1G74-738-MONOMER"/>
<dbReference type="Proteomes" id="UP000000653">
    <property type="component" value="Chromosome"/>
</dbReference>
<dbReference type="GO" id="GO:1990904">
    <property type="term" value="C:ribonucleoprotein complex"/>
    <property type="evidence" value="ECO:0007669"/>
    <property type="project" value="UniProtKB-KW"/>
</dbReference>
<dbReference type="GO" id="GO:0005840">
    <property type="term" value="C:ribosome"/>
    <property type="evidence" value="ECO:0007669"/>
    <property type="project" value="UniProtKB-KW"/>
</dbReference>
<dbReference type="GO" id="GO:0019843">
    <property type="term" value="F:rRNA binding"/>
    <property type="evidence" value="ECO:0007669"/>
    <property type="project" value="UniProtKB-UniRule"/>
</dbReference>
<dbReference type="GO" id="GO:0003735">
    <property type="term" value="F:structural constituent of ribosome"/>
    <property type="evidence" value="ECO:0007669"/>
    <property type="project" value="InterPro"/>
</dbReference>
<dbReference type="GO" id="GO:0006412">
    <property type="term" value="P:translation"/>
    <property type="evidence" value="ECO:0007669"/>
    <property type="project" value="UniProtKB-UniRule"/>
</dbReference>
<dbReference type="FunFam" id="3.30.70.330:FF:000001">
    <property type="entry name" value="50S ribosomal protein L23"/>
    <property type="match status" value="1"/>
</dbReference>
<dbReference type="Gene3D" id="3.30.70.330">
    <property type="match status" value="1"/>
</dbReference>
<dbReference type="HAMAP" id="MF_01369_B">
    <property type="entry name" value="Ribosomal_uL23_B"/>
    <property type="match status" value="1"/>
</dbReference>
<dbReference type="InterPro" id="IPR012677">
    <property type="entry name" value="Nucleotide-bd_a/b_plait_sf"/>
</dbReference>
<dbReference type="InterPro" id="IPR013025">
    <property type="entry name" value="Ribosomal_uL23-like"/>
</dbReference>
<dbReference type="InterPro" id="IPR012678">
    <property type="entry name" value="Ribosomal_uL23/eL15/eS24_sf"/>
</dbReference>
<dbReference type="NCBIfam" id="NF004359">
    <property type="entry name" value="PRK05738.1-3"/>
    <property type="match status" value="1"/>
</dbReference>
<dbReference type="NCBIfam" id="NF004363">
    <property type="entry name" value="PRK05738.2-4"/>
    <property type="match status" value="1"/>
</dbReference>
<dbReference type="PANTHER" id="PTHR11620">
    <property type="entry name" value="60S RIBOSOMAL PROTEIN L23A"/>
    <property type="match status" value="1"/>
</dbReference>
<dbReference type="Pfam" id="PF00276">
    <property type="entry name" value="Ribosomal_L23"/>
    <property type="match status" value="1"/>
</dbReference>
<dbReference type="SUPFAM" id="SSF54189">
    <property type="entry name" value="Ribosomal proteins S24e, L23 and L15e"/>
    <property type="match status" value="1"/>
</dbReference>
<evidence type="ECO:0000255" key="1">
    <source>
        <dbReference type="HAMAP-Rule" id="MF_01369"/>
    </source>
</evidence>
<evidence type="ECO:0000305" key="2"/>